<protein>
    <recommendedName>
        <fullName evidence="1">Probable 6-oxopurine nucleoside phosphorylase</fullName>
        <ecNumber evidence="1">2.4.2.1</ecNumber>
    </recommendedName>
    <alternativeName>
        <fullName evidence="1">Purine nucleoside phosphorylase</fullName>
        <shortName evidence="1">PNP</shortName>
    </alternativeName>
</protein>
<comment type="function">
    <text evidence="1">Purine nucleoside phosphorylase which is highly specific for 6-oxopurine nucleosides. Cleaves guanosine or inosine to respective bases and sugar-1-phosphate molecules. Involved in purine salvage.</text>
</comment>
<comment type="catalytic activity">
    <reaction evidence="1">
        <text>a purine D-ribonucleoside + phosphate = a purine nucleobase + alpha-D-ribose 1-phosphate</text>
        <dbReference type="Rhea" id="RHEA:19805"/>
        <dbReference type="ChEBI" id="CHEBI:26386"/>
        <dbReference type="ChEBI" id="CHEBI:43474"/>
        <dbReference type="ChEBI" id="CHEBI:57720"/>
        <dbReference type="ChEBI" id="CHEBI:142355"/>
        <dbReference type="EC" id="2.4.2.1"/>
    </reaction>
</comment>
<comment type="pathway">
    <text evidence="1">Purine metabolism; purine nucleoside salvage.</text>
</comment>
<comment type="subunit">
    <text evidence="1">Homohexamer. Dimer of a homotrimer.</text>
</comment>
<comment type="miscellaneous">
    <text evidence="1">Although this enzyme belongs to the family of MTA phosphorylases based on sequence homology, it has been shown that conserved amino acid substitutions in the substrate binding pocket convert the substrate specificity of this enzyme from 6-aminopurines to 6-oxopurines.</text>
</comment>
<comment type="similarity">
    <text evidence="1">Belongs to the PNP/MTAP phosphorylase family. MTAP subfamily.</text>
</comment>
<feature type="chain" id="PRO_0000415084" description="Probable 6-oxopurine nucleoside phosphorylase">
    <location>
        <begin position="1"/>
        <end position="243"/>
    </location>
</feature>
<feature type="binding site" evidence="1">
    <location>
        <position position="8"/>
    </location>
    <ligand>
        <name>phosphate</name>
        <dbReference type="ChEBI" id="CHEBI:43474"/>
    </ligand>
</feature>
<feature type="binding site" evidence="1">
    <location>
        <begin position="48"/>
        <end position="49"/>
    </location>
    <ligand>
        <name>phosphate</name>
        <dbReference type="ChEBI" id="CHEBI:43474"/>
    </ligand>
</feature>
<feature type="binding site" evidence="1">
    <location>
        <position position="174"/>
    </location>
    <ligand>
        <name>substrate</name>
    </ligand>
</feature>
<feature type="binding site" evidence="1">
    <location>
        <position position="175"/>
    </location>
    <ligand>
        <name>phosphate</name>
        <dbReference type="ChEBI" id="CHEBI:43474"/>
    </ligand>
</feature>
<feature type="binding site" evidence="1">
    <location>
        <begin position="198"/>
        <end position="200"/>
    </location>
    <ligand>
        <name>substrate</name>
    </ligand>
</feature>
<feature type="site" description="Important for substrate specificity" evidence="1">
    <location>
        <position position="157"/>
    </location>
</feature>
<feature type="site" description="Important for substrate specificity" evidence="1">
    <location>
        <position position="210"/>
    </location>
</feature>
<name>PNPH_ARCFU</name>
<reference key="1">
    <citation type="journal article" date="1997" name="Nature">
        <title>The complete genome sequence of the hyperthermophilic, sulphate-reducing archaeon Archaeoglobus fulgidus.</title>
        <authorList>
            <person name="Klenk H.-P."/>
            <person name="Clayton R.A."/>
            <person name="Tomb J.-F."/>
            <person name="White O."/>
            <person name="Nelson K.E."/>
            <person name="Ketchum K.A."/>
            <person name="Dodson R.J."/>
            <person name="Gwinn M.L."/>
            <person name="Hickey E.K."/>
            <person name="Peterson J.D."/>
            <person name="Richardson D.L."/>
            <person name="Kerlavage A.R."/>
            <person name="Graham D.E."/>
            <person name="Kyrpides N.C."/>
            <person name="Fleischmann R.D."/>
            <person name="Quackenbush J."/>
            <person name="Lee N.H."/>
            <person name="Sutton G.G."/>
            <person name="Gill S.R."/>
            <person name="Kirkness E.F."/>
            <person name="Dougherty B.A."/>
            <person name="McKenney K."/>
            <person name="Adams M.D."/>
            <person name="Loftus B.J."/>
            <person name="Peterson S.N."/>
            <person name="Reich C.I."/>
            <person name="McNeil L.K."/>
            <person name="Badger J.H."/>
            <person name="Glodek A."/>
            <person name="Zhou L."/>
            <person name="Overbeek R."/>
            <person name="Gocayne J.D."/>
            <person name="Weidman J.F."/>
            <person name="McDonald L.A."/>
            <person name="Utterback T.R."/>
            <person name="Cotton M.D."/>
            <person name="Spriggs T."/>
            <person name="Artiach P."/>
            <person name="Kaine B.P."/>
            <person name="Sykes S.M."/>
            <person name="Sadow P.W."/>
            <person name="D'Andrea K.P."/>
            <person name="Bowman C."/>
            <person name="Fujii C."/>
            <person name="Garland S.A."/>
            <person name="Mason T.M."/>
            <person name="Olsen G.J."/>
            <person name="Fraser C.M."/>
            <person name="Smith H.O."/>
            <person name="Woese C.R."/>
            <person name="Venter J.C."/>
        </authorList>
    </citation>
    <scope>NUCLEOTIDE SEQUENCE [LARGE SCALE GENOMIC DNA]</scope>
    <source>
        <strain>ATCC 49558 / DSM 4304 / JCM 9628 / NBRC 100126 / VC-16</strain>
    </source>
</reference>
<gene>
    <name type="ordered locus">AF_1788</name>
</gene>
<evidence type="ECO:0000255" key="1">
    <source>
        <dbReference type="HAMAP-Rule" id="MF_01963"/>
    </source>
</evidence>
<keyword id="KW-0328">Glycosyltransferase</keyword>
<keyword id="KW-0660">Purine salvage</keyword>
<keyword id="KW-1185">Reference proteome</keyword>
<keyword id="KW-0808">Transferase</keyword>
<dbReference type="EC" id="2.4.2.1" evidence="1"/>
<dbReference type="EMBL" id="AE000782">
    <property type="protein sequence ID" value="AAB89459.1"/>
    <property type="molecule type" value="Genomic_DNA"/>
</dbReference>
<dbReference type="PIR" id="C69473">
    <property type="entry name" value="C69473"/>
</dbReference>
<dbReference type="SMR" id="O28486"/>
<dbReference type="STRING" id="224325.AF_1788"/>
<dbReference type="PaxDb" id="224325-AF_1788"/>
<dbReference type="EnsemblBacteria" id="AAB89459">
    <property type="protein sequence ID" value="AAB89459"/>
    <property type="gene ID" value="AF_1788"/>
</dbReference>
<dbReference type="KEGG" id="afu:AF_1788"/>
<dbReference type="eggNOG" id="arCOG01327">
    <property type="taxonomic scope" value="Archaea"/>
</dbReference>
<dbReference type="HOGENOM" id="CLU_054456_0_2_2"/>
<dbReference type="OrthoDB" id="7681at2157"/>
<dbReference type="PhylomeDB" id="O28486"/>
<dbReference type="UniPathway" id="UPA00606"/>
<dbReference type="Proteomes" id="UP000002199">
    <property type="component" value="Chromosome"/>
</dbReference>
<dbReference type="GO" id="GO:0005829">
    <property type="term" value="C:cytosol"/>
    <property type="evidence" value="ECO:0007669"/>
    <property type="project" value="TreeGrafter"/>
</dbReference>
<dbReference type="GO" id="GO:0017061">
    <property type="term" value="F:S-methyl-5-thioadenosine phosphorylase activity"/>
    <property type="evidence" value="ECO:0007669"/>
    <property type="project" value="InterPro"/>
</dbReference>
<dbReference type="GO" id="GO:0019509">
    <property type="term" value="P:L-methionine salvage from methylthioadenosine"/>
    <property type="evidence" value="ECO:0007669"/>
    <property type="project" value="TreeGrafter"/>
</dbReference>
<dbReference type="GO" id="GO:0006166">
    <property type="term" value="P:purine ribonucleoside salvage"/>
    <property type="evidence" value="ECO:0007669"/>
    <property type="project" value="UniProtKB-UniRule"/>
</dbReference>
<dbReference type="CDD" id="cd09010">
    <property type="entry name" value="MTAP_SsMTAPII_like_MTIP"/>
    <property type="match status" value="1"/>
</dbReference>
<dbReference type="Gene3D" id="3.40.50.1580">
    <property type="entry name" value="Nucleoside phosphorylase domain"/>
    <property type="match status" value="1"/>
</dbReference>
<dbReference type="HAMAP" id="MF_01963">
    <property type="entry name" value="MTAP"/>
    <property type="match status" value="1"/>
</dbReference>
<dbReference type="InterPro" id="IPR010044">
    <property type="entry name" value="MTAP"/>
</dbReference>
<dbReference type="InterPro" id="IPR000845">
    <property type="entry name" value="Nucleoside_phosphorylase_d"/>
</dbReference>
<dbReference type="InterPro" id="IPR035994">
    <property type="entry name" value="Nucleoside_phosphorylase_sf"/>
</dbReference>
<dbReference type="NCBIfam" id="TIGR01694">
    <property type="entry name" value="MTAP"/>
    <property type="match status" value="1"/>
</dbReference>
<dbReference type="PANTHER" id="PTHR42679">
    <property type="entry name" value="S-METHYL-5'-THIOADENOSINE PHOSPHORYLASE"/>
    <property type="match status" value="1"/>
</dbReference>
<dbReference type="PANTHER" id="PTHR42679:SF2">
    <property type="entry name" value="S-METHYL-5'-THIOADENOSINE PHOSPHORYLASE"/>
    <property type="match status" value="1"/>
</dbReference>
<dbReference type="Pfam" id="PF01048">
    <property type="entry name" value="PNP_UDP_1"/>
    <property type="match status" value="1"/>
</dbReference>
<dbReference type="SUPFAM" id="SSF53167">
    <property type="entry name" value="Purine and uridine phosphorylases"/>
    <property type="match status" value="1"/>
</dbReference>
<organism>
    <name type="scientific">Archaeoglobus fulgidus (strain ATCC 49558 / DSM 4304 / JCM 9628 / NBRC 100126 / VC-16)</name>
    <dbReference type="NCBI Taxonomy" id="224325"/>
    <lineage>
        <taxon>Archaea</taxon>
        <taxon>Methanobacteriati</taxon>
        <taxon>Methanobacteriota</taxon>
        <taxon>Archaeoglobi</taxon>
        <taxon>Archaeoglobales</taxon>
        <taxon>Archaeoglobaceae</taxon>
        <taxon>Archaeoglobus</taxon>
    </lineage>
</organism>
<sequence>MIGIIGGTHILEIKVLKDVEETRIETPYGTAEIDVGRVDGIDVAIIQRHGKRKDKPPHRINHAANFYALKSLGVKYVIGMGSVGALREEYSLPSLIIPHDYIDFFSGVTIYNDSLVHVTPGFDEYLREVLVEVARKISSFPVIDKGVYFQTRGPRLETKAEIAMIKSFADCVGMTAGSEATIARELGLSYAIVCTMDNYAHGIKNQSIDYREIVEKAKENARECLKIVEEAVKKVWEEKIQRT</sequence>
<proteinExistence type="inferred from homology"/>
<accession>O28486</accession>